<evidence type="ECO:0000255" key="1">
    <source>
        <dbReference type="HAMAP-Rule" id="MF_00298"/>
    </source>
</evidence>
<dbReference type="EC" id="3.6.1.-" evidence="1"/>
<dbReference type="EMBL" id="CP001196">
    <property type="protein sequence ID" value="ACI91741.1"/>
    <property type="molecule type" value="Genomic_DNA"/>
</dbReference>
<dbReference type="EMBL" id="CP002826">
    <property type="protein sequence ID" value="AEI08021.1"/>
    <property type="molecule type" value="Genomic_DNA"/>
</dbReference>
<dbReference type="RefSeq" id="WP_012561772.1">
    <property type="nucleotide sequence ID" value="NC_015684.1"/>
</dbReference>
<dbReference type="SMR" id="B6JD11"/>
<dbReference type="STRING" id="504832.OCA5_c33470"/>
<dbReference type="KEGG" id="oca:OCAR_4597"/>
<dbReference type="KEGG" id="ocg:OCA5_c33470"/>
<dbReference type="PATRIC" id="fig|504832.7.peg.3518"/>
<dbReference type="eggNOG" id="COG0494">
    <property type="taxonomic scope" value="Bacteria"/>
</dbReference>
<dbReference type="HOGENOM" id="CLU_087195_3_0_5"/>
<dbReference type="OrthoDB" id="9816040at2"/>
<dbReference type="Proteomes" id="UP000007730">
    <property type="component" value="Chromosome"/>
</dbReference>
<dbReference type="GO" id="GO:0034432">
    <property type="term" value="F:bis(5'-adenosyl)-pentaphosphatase activity"/>
    <property type="evidence" value="ECO:0007669"/>
    <property type="project" value="TreeGrafter"/>
</dbReference>
<dbReference type="GO" id="GO:0008893">
    <property type="term" value="F:guanosine-3',5'-bis(diphosphate) 3'-diphosphatase activity"/>
    <property type="evidence" value="ECO:0007669"/>
    <property type="project" value="TreeGrafter"/>
</dbReference>
<dbReference type="GO" id="GO:0006753">
    <property type="term" value="P:nucleoside phosphate metabolic process"/>
    <property type="evidence" value="ECO:0007669"/>
    <property type="project" value="TreeGrafter"/>
</dbReference>
<dbReference type="GO" id="GO:0019693">
    <property type="term" value="P:ribose phosphate metabolic process"/>
    <property type="evidence" value="ECO:0007669"/>
    <property type="project" value="TreeGrafter"/>
</dbReference>
<dbReference type="CDD" id="cd03671">
    <property type="entry name" value="NUDIX_Ap4A_hydrolase_plant_like"/>
    <property type="match status" value="1"/>
</dbReference>
<dbReference type="Gene3D" id="3.90.79.10">
    <property type="entry name" value="Nucleoside Triphosphate Pyrophosphohydrolase"/>
    <property type="match status" value="1"/>
</dbReference>
<dbReference type="HAMAP" id="MF_00298">
    <property type="entry name" value="Nudix_RppH"/>
    <property type="match status" value="1"/>
</dbReference>
<dbReference type="InterPro" id="IPR015797">
    <property type="entry name" value="NUDIX_hydrolase-like_dom_sf"/>
</dbReference>
<dbReference type="InterPro" id="IPR020084">
    <property type="entry name" value="NUDIX_hydrolase_CS"/>
</dbReference>
<dbReference type="InterPro" id="IPR000086">
    <property type="entry name" value="NUDIX_hydrolase_dom"/>
</dbReference>
<dbReference type="InterPro" id="IPR022927">
    <property type="entry name" value="RppH"/>
</dbReference>
<dbReference type="NCBIfam" id="NF001938">
    <property type="entry name" value="PRK00714.1-5"/>
    <property type="match status" value="1"/>
</dbReference>
<dbReference type="PANTHER" id="PTHR11839:SF22">
    <property type="entry name" value="NUDIX HYDROLASE 26, CHLOROPLASTIC"/>
    <property type="match status" value="1"/>
</dbReference>
<dbReference type="PANTHER" id="PTHR11839">
    <property type="entry name" value="UDP/ADP-SUGAR PYROPHOSPHATASE"/>
    <property type="match status" value="1"/>
</dbReference>
<dbReference type="Pfam" id="PF00293">
    <property type="entry name" value="NUDIX"/>
    <property type="match status" value="1"/>
</dbReference>
<dbReference type="SUPFAM" id="SSF55811">
    <property type="entry name" value="Nudix"/>
    <property type="match status" value="1"/>
</dbReference>
<dbReference type="PROSITE" id="PS51462">
    <property type="entry name" value="NUDIX"/>
    <property type="match status" value="1"/>
</dbReference>
<dbReference type="PROSITE" id="PS00893">
    <property type="entry name" value="NUDIX_BOX"/>
    <property type="match status" value="1"/>
</dbReference>
<proteinExistence type="inferred from homology"/>
<sequence length="166" mass="19297">MARYEDLPYRSCVGMMLLNPKGLVFIGRRVGGTELIDPAHVWQMPQGGIDPGEDYWEAAQRELLEETNARSIEKLAEATDWFTYDIPRMIAGRSWKGRYRGQRQKWFAIRFTGDDSEINVASPAGHKAEFVDWRWEPMQNLPNLVVPFKRPVYERVVKEFSRFAGE</sequence>
<name>RPPH_AFIC5</name>
<organism>
    <name type="scientific">Afipia carboxidovorans (strain ATCC 49405 / DSM 1227 / KCTC 32145 / OM5)</name>
    <name type="common">Oligotropha carboxidovorans</name>
    <dbReference type="NCBI Taxonomy" id="504832"/>
    <lineage>
        <taxon>Bacteria</taxon>
        <taxon>Pseudomonadati</taxon>
        <taxon>Pseudomonadota</taxon>
        <taxon>Alphaproteobacteria</taxon>
        <taxon>Hyphomicrobiales</taxon>
        <taxon>Nitrobacteraceae</taxon>
        <taxon>Afipia</taxon>
    </lineage>
</organism>
<keyword id="KW-0378">Hydrolase</keyword>
<keyword id="KW-1185">Reference proteome</keyword>
<gene>
    <name evidence="1" type="primary">rppH</name>
    <name evidence="1" type="synonym">nudH</name>
    <name type="ordered locus">OCAR_4597</name>
    <name type="ordered locus">OCA5_c33470</name>
</gene>
<protein>
    <recommendedName>
        <fullName evidence="1">RNA pyrophosphohydrolase</fullName>
        <ecNumber evidence="1">3.6.1.-</ecNumber>
    </recommendedName>
    <alternativeName>
        <fullName evidence="1">(Di)nucleoside polyphosphate hydrolase</fullName>
    </alternativeName>
</protein>
<reference key="1">
    <citation type="journal article" date="2008" name="J. Bacteriol.">
        <title>Genome sequence of the chemolithoautotrophic bacterium Oligotropha carboxidovorans OM5T.</title>
        <authorList>
            <person name="Paul D."/>
            <person name="Bridges S."/>
            <person name="Burgess S.C."/>
            <person name="Dandass Y."/>
            <person name="Lawrence M.L."/>
        </authorList>
    </citation>
    <scope>NUCLEOTIDE SEQUENCE [LARGE SCALE GENOMIC DNA]</scope>
    <source>
        <strain>ATCC 49405 / DSM 1227 / KCTC 32145 / OM5</strain>
    </source>
</reference>
<reference key="2">
    <citation type="journal article" date="2011" name="J. Bacteriol.">
        <title>Complete genome sequences of the chemolithoautotrophic Oligotropha carboxidovorans strains OM4 and OM5.</title>
        <authorList>
            <person name="Volland S."/>
            <person name="Rachinger M."/>
            <person name="Strittmatter A."/>
            <person name="Daniel R."/>
            <person name="Gottschalk G."/>
            <person name="Meyer O."/>
        </authorList>
    </citation>
    <scope>NUCLEOTIDE SEQUENCE [LARGE SCALE GENOMIC DNA]</scope>
    <source>
        <strain>ATCC 49405 / DSM 1227 / KCTC 32145 / OM5</strain>
    </source>
</reference>
<comment type="function">
    <text evidence="1">Accelerates the degradation of transcripts by removing pyrophosphate from the 5'-end of triphosphorylated RNA, leading to a more labile monophosphorylated state that can stimulate subsequent ribonuclease cleavage.</text>
</comment>
<comment type="cofactor">
    <cofactor evidence="1">
        <name>a divalent metal cation</name>
        <dbReference type="ChEBI" id="CHEBI:60240"/>
    </cofactor>
</comment>
<comment type="similarity">
    <text evidence="1">Belongs to the Nudix hydrolase family. RppH subfamily.</text>
</comment>
<feature type="chain" id="PRO_1000115285" description="RNA pyrophosphohydrolase">
    <location>
        <begin position="1"/>
        <end position="166"/>
    </location>
</feature>
<feature type="domain" description="Nudix hydrolase" evidence="1">
    <location>
        <begin position="8"/>
        <end position="158"/>
    </location>
</feature>
<feature type="short sequence motif" description="Nudix box">
    <location>
        <begin position="47"/>
        <end position="68"/>
    </location>
</feature>
<accession>B6JD11</accession>
<accession>F8BTC9</accession>